<protein>
    <recommendedName>
        <fullName evidence="1">Glycerol kinase</fullName>
        <ecNumber evidence="1">2.7.1.30</ecNumber>
    </recommendedName>
    <alternativeName>
        <fullName evidence="1">ATP:glycerol 3-phosphotransferase</fullName>
    </alternativeName>
    <alternativeName>
        <fullName evidence="1">Glycerokinase</fullName>
        <shortName evidence="1">GK</shortName>
    </alternativeName>
</protein>
<accession>A3CPV3</accession>
<dbReference type="EC" id="2.7.1.30" evidence="1"/>
<dbReference type="EMBL" id="CP000387">
    <property type="protein sequence ID" value="ABN45208.1"/>
    <property type="molecule type" value="Genomic_DNA"/>
</dbReference>
<dbReference type="RefSeq" id="WP_004190493.1">
    <property type="nucleotide sequence ID" value="NC_009009.1"/>
</dbReference>
<dbReference type="RefSeq" id="YP_001035758.1">
    <property type="nucleotide sequence ID" value="NC_009009.1"/>
</dbReference>
<dbReference type="SMR" id="A3CPV3"/>
<dbReference type="STRING" id="388919.SSA_1826"/>
<dbReference type="KEGG" id="ssa:SSA_1826"/>
<dbReference type="PATRIC" id="fig|388919.9.peg.1732"/>
<dbReference type="eggNOG" id="COG0554">
    <property type="taxonomic scope" value="Bacteria"/>
</dbReference>
<dbReference type="HOGENOM" id="CLU_009281_2_3_9"/>
<dbReference type="OrthoDB" id="9805576at2"/>
<dbReference type="UniPathway" id="UPA00618">
    <property type="reaction ID" value="UER00672"/>
</dbReference>
<dbReference type="Proteomes" id="UP000002148">
    <property type="component" value="Chromosome"/>
</dbReference>
<dbReference type="GO" id="GO:0005829">
    <property type="term" value="C:cytosol"/>
    <property type="evidence" value="ECO:0007669"/>
    <property type="project" value="TreeGrafter"/>
</dbReference>
<dbReference type="GO" id="GO:0005524">
    <property type="term" value="F:ATP binding"/>
    <property type="evidence" value="ECO:0007669"/>
    <property type="project" value="UniProtKB-UniRule"/>
</dbReference>
<dbReference type="GO" id="GO:0004370">
    <property type="term" value="F:glycerol kinase activity"/>
    <property type="evidence" value="ECO:0000250"/>
    <property type="project" value="UniProtKB"/>
</dbReference>
<dbReference type="GO" id="GO:0019563">
    <property type="term" value="P:glycerol catabolic process"/>
    <property type="evidence" value="ECO:0007669"/>
    <property type="project" value="UniProtKB-UniRule"/>
</dbReference>
<dbReference type="GO" id="GO:0006071">
    <property type="term" value="P:glycerol metabolic process"/>
    <property type="evidence" value="ECO:0000250"/>
    <property type="project" value="UniProtKB"/>
</dbReference>
<dbReference type="GO" id="GO:0006072">
    <property type="term" value="P:glycerol-3-phosphate metabolic process"/>
    <property type="evidence" value="ECO:0007669"/>
    <property type="project" value="InterPro"/>
</dbReference>
<dbReference type="CDD" id="cd07786">
    <property type="entry name" value="FGGY_EcGK_like"/>
    <property type="match status" value="1"/>
</dbReference>
<dbReference type="FunFam" id="3.30.420.40:FF:000007">
    <property type="entry name" value="Glycerol kinase"/>
    <property type="match status" value="1"/>
</dbReference>
<dbReference type="FunFam" id="3.30.420.40:FF:000008">
    <property type="entry name" value="Glycerol kinase"/>
    <property type="match status" value="1"/>
</dbReference>
<dbReference type="Gene3D" id="3.30.420.40">
    <property type="match status" value="2"/>
</dbReference>
<dbReference type="HAMAP" id="MF_00186">
    <property type="entry name" value="Glycerol_kin"/>
    <property type="match status" value="1"/>
</dbReference>
<dbReference type="InterPro" id="IPR043129">
    <property type="entry name" value="ATPase_NBD"/>
</dbReference>
<dbReference type="InterPro" id="IPR000577">
    <property type="entry name" value="Carb_kinase_FGGY"/>
</dbReference>
<dbReference type="InterPro" id="IPR018483">
    <property type="entry name" value="Carb_kinase_FGGY_CS"/>
</dbReference>
<dbReference type="InterPro" id="IPR018485">
    <property type="entry name" value="FGGY_C"/>
</dbReference>
<dbReference type="InterPro" id="IPR018484">
    <property type="entry name" value="FGGY_N"/>
</dbReference>
<dbReference type="InterPro" id="IPR005999">
    <property type="entry name" value="Glycerol_kin"/>
</dbReference>
<dbReference type="NCBIfam" id="TIGR01311">
    <property type="entry name" value="glycerol_kin"/>
    <property type="match status" value="1"/>
</dbReference>
<dbReference type="NCBIfam" id="NF000756">
    <property type="entry name" value="PRK00047.1"/>
    <property type="match status" value="1"/>
</dbReference>
<dbReference type="PANTHER" id="PTHR10196:SF69">
    <property type="entry name" value="GLYCEROL KINASE"/>
    <property type="match status" value="1"/>
</dbReference>
<dbReference type="PANTHER" id="PTHR10196">
    <property type="entry name" value="SUGAR KINASE"/>
    <property type="match status" value="1"/>
</dbReference>
<dbReference type="Pfam" id="PF02782">
    <property type="entry name" value="FGGY_C"/>
    <property type="match status" value="1"/>
</dbReference>
<dbReference type="Pfam" id="PF00370">
    <property type="entry name" value="FGGY_N"/>
    <property type="match status" value="1"/>
</dbReference>
<dbReference type="PIRSF" id="PIRSF000538">
    <property type="entry name" value="GlpK"/>
    <property type="match status" value="1"/>
</dbReference>
<dbReference type="SUPFAM" id="SSF53067">
    <property type="entry name" value="Actin-like ATPase domain"/>
    <property type="match status" value="2"/>
</dbReference>
<dbReference type="PROSITE" id="PS00933">
    <property type="entry name" value="FGGY_KINASES_1"/>
    <property type="match status" value="1"/>
</dbReference>
<dbReference type="PROSITE" id="PS00445">
    <property type="entry name" value="FGGY_KINASES_2"/>
    <property type="match status" value="1"/>
</dbReference>
<feature type="chain" id="PRO_1000020805" description="Glycerol kinase">
    <location>
        <begin position="1"/>
        <end position="502"/>
    </location>
</feature>
<feature type="binding site" evidence="1">
    <location>
        <position position="14"/>
    </location>
    <ligand>
        <name>ADP</name>
        <dbReference type="ChEBI" id="CHEBI:456216"/>
    </ligand>
</feature>
<feature type="binding site" evidence="1">
    <location>
        <position position="14"/>
    </location>
    <ligand>
        <name>ATP</name>
        <dbReference type="ChEBI" id="CHEBI:30616"/>
    </ligand>
</feature>
<feature type="binding site" evidence="1">
    <location>
        <position position="14"/>
    </location>
    <ligand>
        <name>sn-glycerol 3-phosphate</name>
        <dbReference type="ChEBI" id="CHEBI:57597"/>
    </ligand>
</feature>
<feature type="binding site" evidence="1">
    <location>
        <position position="15"/>
    </location>
    <ligand>
        <name>ATP</name>
        <dbReference type="ChEBI" id="CHEBI:30616"/>
    </ligand>
</feature>
<feature type="binding site" evidence="1">
    <location>
        <position position="16"/>
    </location>
    <ligand>
        <name>ATP</name>
        <dbReference type="ChEBI" id="CHEBI:30616"/>
    </ligand>
</feature>
<feature type="binding site" evidence="1">
    <location>
        <position position="18"/>
    </location>
    <ligand>
        <name>ADP</name>
        <dbReference type="ChEBI" id="CHEBI:456216"/>
    </ligand>
</feature>
<feature type="binding site" evidence="1">
    <location>
        <position position="84"/>
    </location>
    <ligand>
        <name>glycerol</name>
        <dbReference type="ChEBI" id="CHEBI:17754"/>
    </ligand>
</feature>
<feature type="binding site" evidence="1">
    <location>
        <position position="84"/>
    </location>
    <ligand>
        <name>sn-glycerol 3-phosphate</name>
        <dbReference type="ChEBI" id="CHEBI:57597"/>
    </ligand>
</feature>
<feature type="binding site" evidence="1">
    <location>
        <position position="85"/>
    </location>
    <ligand>
        <name>glycerol</name>
        <dbReference type="ChEBI" id="CHEBI:17754"/>
    </ligand>
</feature>
<feature type="binding site" evidence="1">
    <location>
        <position position="85"/>
    </location>
    <ligand>
        <name>sn-glycerol 3-phosphate</name>
        <dbReference type="ChEBI" id="CHEBI:57597"/>
    </ligand>
</feature>
<feature type="binding site" evidence="1">
    <location>
        <position position="136"/>
    </location>
    <ligand>
        <name>glycerol</name>
        <dbReference type="ChEBI" id="CHEBI:17754"/>
    </ligand>
</feature>
<feature type="binding site" evidence="1">
    <location>
        <position position="136"/>
    </location>
    <ligand>
        <name>sn-glycerol 3-phosphate</name>
        <dbReference type="ChEBI" id="CHEBI:57597"/>
    </ligand>
</feature>
<feature type="binding site" evidence="1">
    <location>
        <position position="246"/>
    </location>
    <ligand>
        <name>glycerol</name>
        <dbReference type="ChEBI" id="CHEBI:17754"/>
    </ligand>
</feature>
<feature type="binding site" evidence="1">
    <location>
        <position position="246"/>
    </location>
    <ligand>
        <name>sn-glycerol 3-phosphate</name>
        <dbReference type="ChEBI" id="CHEBI:57597"/>
    </ligand>
</feature>
<feature type="binding site" evidence="1">
    <location>
        <position position="247"/>
    </location>
    <ligand>
        <name>glycerol</name>
        <dbReference type="ChEBI" id="CHEBI:17754"/>
    </ligand>
</feature>
<feature type="binding site" evidence="1">
    <location>
        <position position="268"/>
    </location>
    <ligand>
        <name>ADP</name>
        <dbReference type="ChEBI" id="CHEBI:456216"/>
    </ligand>
</feature>
<feature type="binding site" evidence="1">
    <location>
        <position position="268"/>
    </location>
    <ligand>
        <name>ATP</name>
        <dbReference type="ChEBI" id="CHEBI:30616"/>
    </ligand>
</feature>
<feature type="binding site" evidence="1">
    <location>
        <position position="311"/>
    </location>
    <ligand>
        <name>ADP</name>
        <dbReference type="ChEBI" id="CHEBI:456216"/>
    </ligand>
</feature>
<feature type="binding site" evidence="1">
    <location>
        <position position="311"/>
    </location>
    <ligand>
        <name>ATP</name>
        <dbReference type="ChEBI" id="CHEBI:30616"/>
    </ligand>
</feature>
<feature type="binding site" evidence="1">
    <location>
        <position position="315"/>
    </location>
    <ligand>
        <name>ATP</name>
        <dbReference type="ChEBI" id="CHEBI:30616"/>
    </ligand>
</feature>
<feature type="binding site" evidence="1">
    <location>
        <position position="412"/>
    </location>
    <ligand>
        <name>ADP</name>
        <dbReference type="ChEBI" id="CHEBI:456216"/>
    </ligand>
</feature>
<feature type="binding site" evidence="1">
    <location>
        <position position="412"/>
    </location>
    <ligand>
        <name>ATP</name>
        <dbReference type="ChEBI" id="CHEBI:30616"/>
    </ligand>
</feature>
<feature type="binding site" evidence="1">
    <location>
        <position position="416"/>
    </location>
    <ligand>
        <name>ADP</name>
        <dbReference type="ChEBI" id="CHEBI:456216"/>
    </ligand>
</feature>
<feature type="modified residue" description="Phosphohistidine; by HPr" evidence="1">
    <location>
        <position position="232"/>
    </location>
</feature>
<reference key="1">
    <citation type="journal article" date="2007" name="J. Bacteriol.">
        <title>Genome of the opportunistic pathogen Streptococcus sanguinis.</title>
        <authorList>
            <person name="Xu P."/>
            <person name="Alves J.M."/>
            <person name="Kitten T."/>
            <person name="Brown A."/>
            <person name="Chen Z."/>
            <person name="Ozaki L.S."/>
            <person name="Manque P."/>
            <person name="Ge X."/>
            <person name="Serrano M.G."/>
            <person name="Puiu D."/>
            <person name="Hendricks S."/>
            <person name="Wang Y."/>
            <person name="Chaplin M.D."/>
            <person name="Akan D."/>
            <person name="Paik S."/>
            <person name="Peterson D.L."/>
            <person name="Macrina F.L."/>
            <person name="Buck G.A."/>
        </authorList>
    </citation>
    <scope>NUCLEOTIDE SEQUENCE [LARGE SCALE GENOMIC DNA]</scope>
    <source>
        <strain>SK36</strain>
    </source>
</reference>
<organism>
    <name type="scientific">Streptococcus sanguinis (strain SK36)</name>
    <dbReference type="NCBI Taxonomy" id="388919"/>
    <lineage>
        <taxon>Bacteria</taxon>
        <taxon>Bacillati</taxon>
        <taxon>Bacillota</taxon>
        <taxon>Bacilli</taxon>
        <taxon>Lactobacillales</taxon>
        <taxon>Streptococcaceae</taxon>
        <taxon>Streptococcus</taxon>
    </lineage>
</organism>
<proteinExistence type="inferred from homology"/>
<gene>
    <name evidence="1" type="primary">glpK</name>
    <name type="ordered locus">SSA_1826</name>
</gene>
<comment type="function">
    <text evidence="1">Key enzyme in the regulation of glycerol uptake and metabolism. Catalyzes the phosphorylation of glycerol to yield sn-glycerol 3-phosphate.</text>
</comment>
<comment type="catalytic activity">
    <reaction evidence="1">
        <text>glycerol + ATP = sn-glycerol 3-phosphate + ADP + H(+)</text>
        <dbReference type="Rhea" id="RHEA:21644"/>
        <dbReference type="ChEBI" id="CHEBI:15378"/>
        <dbReference type="ChEBI" id="CHEBI:17754"/>
        <dbReference type="ChEBI" id="CHEBI:30616"/>
        <dbReference type="ChEBI" id="CHEBI:57597"/>
        <dbReference type="ChEBI" id="CHEBI:456216"/>
        <dbReference type="EC" id="2.7.1.30"/>
    </reaction>
</comment>
<comment type="activity regulation">
    <text evidence="1">Activated by phosphorylation and inhibited by fructose 1,6-bisphosphate (FBP).</text>
</comment>
<comment type="pathway">
    <text evidence="1">Polyol metabolism; glycerol degradation via glycerol kinase pathway; sn-glycerol 3-phosphate from glycerol: step 1/1.</text>
</comment>
<comment type="subunit">
    <text evidence="1">Homotetramer and homodimer (in equilibrium).</text>
</comment>
<comment type="PTM">
    <text evidence="1">The phosphoenolpyruvate-dependent sugar phosphotransferase system (PTS), including enzyme I, and histidine-containing protein (HPr) are required for the phosphorylation, which leads to the activation of the enzyme.</text>
</comment>
<comment type="similarity">
    <text evidence="1">Belongs to the FGGY kinase family.</text>
</comment>
<sequence>MSQEKYIMAIDQGTTSSRAIIFNKKGEKVSSSQKEFTQIFPQAGWVEHNANEIWNSVQSVIAGAFIESGVKPNQIEAIGITNQRETTVVWDKNTGLPIYNAIVWQSRQTAPLAEQLKSQGYVEKFHEKTGLIIDAYFSATKVRWILDHVEGAQERAEKGELLFGTIDTWLVWKLTDGAAHVTDYSNAARTMLYNIKELKWDDEILEILNIPKAMLPEVRSNSEIYGKTAPFHFYGGEVPISGMAGDQQAALFGQLAFEPGMVKNTYGTGSFIIMNTGEEMQLSENNLLTTIGYGINGKVYYALEGSIFIAGSAIQWLRDGLRMVENSPESEKYALDSHNNDEVYVVPAFTGLGAPYWDQNARGSVFGLTRGTSKEDFIKATLQSIAYQVRDIIDTMQVDAKTAIQVLKVDGGAAMNNFLMQFQADILGIDIARAKNLETTALGAAFLAGLSVGYWKDLDELRTLNETGELFEPSMNESRKEQLYKGWKKAVKATQAFAEIDD</sequence>
<evidence type="ECO:0000255" key="1">
    <source>
        <dbReference type="HAMAP-Rule" id="MF_00186"/>
    </source>
</evidence>
<keyword id="KW-0067">ATP-binding</keyword>
<keyword id="KW-0319">Glycerol metabolism</keyword>
<keyword id="KW-0418">Kinase</keyword>
<keyword id="KW-0547">Nucleotide-binding</keyword>
<keyword id="KW-0597">Phosphoprotein</keyword>
<keyword id="KW-1185">Reference proteome</keyword>
<keyword id="KW-0808">Transferase</keyword>
<name>GLPK_STRSV</name>